<keyword id="KW-0963">Cytoplasm</keyword>
<keyword id="KW-0238">DNA-binding</keyword>
<keyword id="KW-0255">Endonuclease</keyword>
<keyword id="KW-0378">Hydrolase</keyword>
<keyword id="KW-0540">Nuclease</keyword>
<keyword id="KW-1185">Reference proteome</keyword>
<name>NUCS_MYCS2</name>
<protein>
    <recommendedName>
        <fullName evidence="1">Endonuclease NucS</fullName>
        <ecNumber evidence="1">3.1.-.-</ecNumber>
    </recommendedName>
</protein>
<dbReference type="EC" id="3.1.-.-" evidence="1"/>
<dbReference type="EMBL" id="CP000480">
    <property type="protein sequence ID" value="ABK73844.1"/>
    <property type="molecule type" value="Genomic_DNA"/>
</dbReference>
<dbReference type="EMBL" id="CP001663">
    <property type="protein sequence ID" value="AFP41244.1"/>
    <property type="status" value="ALT_INIT"/>
    <property type="molecule type" value="Genomic_DNA"/>
</dbReference>
<dbReference type="RefSeq" id="WP_011730195.1">
    <property type="nucleotide sequence ID" value="NZ_SIJM01000024.1"/>
</dbReference>
<dbReference type="RefSeq" id="YP_889178.1">
    <property type="nucleotide sequence ID" value="NC_008596.1"/>
</dbReference>
<dbReference type="SMR" id="A0R1Z0"/>
<dbReference type="STRING" id="246196.MSMEG_4923"/>
<dbReference type="PaxDb" id="246196-MSMEI_4796"/>
<dbReference type="GeneID" id="93459593"/>
<dbReference type="KEGG" id="msb:LJ00_24345"/>
<dbReference type="KEGG" id="msg:MSMEI_4796"/>
<dbReference type="KEGG" id="msm:MSMEG_4923"/>
<dbReference type="PATRIC" id="fig|246196.19.peg.4804"/>
<dbReference type="eggNOG" id="COG1637">
    <property type="taxonomic scope" value="Bacteria"/>
</dbReference>
<dbReference type="OrthoDB" id="3344925at2"/>
<dbReference type="Proteomes" id="UP000000757">
    <property type="component" value="Chromosome"/>
</dbReference>
<dbReference type="Proteomes" id="UP000006158">
    <property type="component" value="Chromosome"/>
</dbReference>
<dbReference type="GO" id="GO:0005737">
    <property type="term" value="C:cytoplasm"/>
    <property type="evidence" value="ECO:0007669"/>
    <property type="project" value="UniProtKB-SubCell"/>
</dbReference>
<dbReference type="GO" id="GO:0003677">
    <property type="term" value="F:DNA binding"/>
    <property type="evidence" value="ECO:0007669"/>
    <property type="project" value="UniProtKB-KW"/>
</dbReference>
<dbReference type="GO" id="GO:0000014">
    <property type="term" value="F:single-stranded DNA endodeoxyribonuclease activity"/>
    <property type="evidence" value="ECO:0007669"/>
    <property type="project" value="UniProtKB-UniRule"/>
</dbReference>
<dbReference type="CDD" id="cd22341">
    <property type="entry name" value="NucS-like"/>
    <property type="match status" value="1"/>
</dbReference>
<dbReference type="Gene3D" id="2.70.180.20">
    <property type="match status" value="1"/>
</dbReference>
<dbReference type="Gene3D" id="3.40.1350.10">
    <property type="match status" value="1"/>
</dbReference>
<dbReference type="HAMAP" id="MF_00722">
    <property type="entry name" value="NucS"/>
    <property type="match status" value="1"/>
</dbReference>
<dbReference type="InterPro" id="IPR002793">
    <property type="entry name" value="Endonuclease_NucS"/>
</dbReference>
<dbReference type="InterPro" id="IPR048301">
    <property type="entry name" value="NucS_C"/>
</dbReference>
<dbReference type="InterPro" id="IPR048302">
    <property type="entry name" value="NucS_N"/>
</dbReference>
<dbReference type="InterPro" id="IPR049173">
    <property type="entry name" value="NucS_N_sf"/>
</dbReference>
<dbReference type="InterPro" id="IPR011856">
    <property type="entry name" value="tRNA_endonuc-like_dom_sf"/>
</dbReference>
<dbReference type="NCBIfam" id="NF002876">
    <property type="entry name" value="PRK03298.1"/>
    <property type="match status" value="1"/>
</dbReference>
<dbReference type="PANTHER" id="PTHR38814">
    <property type="entry name" value="ENDONUCLEASE NUCS"/>
    <property type="match status" value="1"/>
</dbReference>
<dbReference type="PANTHER" id="PTHR38814:SF1">
    <property type="entry name" value="ENDONUCLEASE NUCS"/>
    <property type="match status" value="1"/>
</dbReference>
<dbReference type="Pfam" id="PF01939">
    <property type="entry name" value="NucS_C"/>
    <property type="match status" value="1"/>
</dbReference>
<dbReference type="Pfam" id="PF21003">
    <property type="entry name" value="NucS_N"/>
    <property type="match status" value="1"/>
</dbReference>
<feature type="chain" id="PRO_1000045832" description="Endonuclease NucS">
    <location>
        <begin position="1"/>
        <end position="224"/>
    </location>
</feature>
<proteinExistence type="inferred from homology"/>
<comment type="function">
    <text evidence="1">Cleaves both 3' and 5' ssDNA extremities of branched DNA structures.</text>
</comment>
<comment type="subcellular location">
    <subcellularLocation>
        <location evidence="1">Cytoplasm</location>
    </subcellularLocation>
</comment>
<comment type="similarity">
    <text evidence="1">Belongs to the NucS endonuclease family.</text>
</comment>
<comment type="sequence caution" evidence="2">
    <conflict type="erroneous initiation">
        <sequence resource="EMBL-CDS" id="AFP41244"/>
    </conflict>
    <text>Extended N-terminus.</text>
</comment>
<organism>
    <name type="scientific">Mycolicibacterium smegmatis (strain ATCC 700084 / mc(2)155)</name>
    <name type="common">Mycobacterium smegmatis</name>
    <dbReference type="NCBI Taxonomy" id="246196"/>
    <lineage>
        <taxon>Bacteria</taxon>
        <taxon>Bacillati</taxon>
        <taxon>Actinomycetota</taxon>
        <taxon>Actinomycetes</taxon>
        <taxon>Mycobacteriales</taxon>
        <taxon>Mycobacteriaceae</taxon>
        <taxon>Mycolicibacterium</taxon>
    </lineage>
</organism>
<sequence>MRLVIAQCTVDYVGRLTAHLPSARRLLLFKADGSVSVHADDRAYKPLNWMSPPCWVTEQDTETGVALWVVENKTGEQLRITVEDIEHDSHHELGVDPGLVKDGVEAHLQALLAEHVELLGAGYTLVRREYPTPIGPVDLLCRDELGRSVAVEIKRRGEIDGVEQLTRYLELLNRDSLLAPVAGVFAAQQIKPQARTLATDRGIRCVTLDYDQMRGMDSDEYRLF</sequence>
<accession>A0R1Z0</accession>
<accession>I7GED9</accession>
<reference key="1">
    <citation type="submission" date="2006-10" db="EMBL/GenBank/DDBJ databases">
        <authorList>
            <person name="Fleischmann R.D."/>
            <person name="Dodson R.J."/>
            <person name="Haft D.H."/>
            <person name="Merkel J.S."/>
            <person name="Nelson W.C."/>
            <person name="Fraser C.M."/>
        </authorList>
    </citation>
    <scope>NUCLEOTIDE SEQUENCE [LARGE SCALE GENOMIC DNA]</scope>
    <source>
        <strain>ATCC 700084 / mc(2)155</strain>
    </source>
</reference>
<reference key="2">
    <citation type="journal article" date="2007" name="Genome Biol.">
        <title>Interrupted coding sequences in Mycobacterium smegmatis: authentic mutations or sequencing errors?</title>
        <authorList>
            <person name="Deshayes C."/>
            <person name="Perrodou E."/>
            <person name="Gallien S."/>
            <person name="Euphrasie D."/>
            <person name="Schaeffer C."/>
            <person name="Van-Dorsselaer A."/>
            <person name="Poch O."/>
            <person name="Lecompte O."/>
            <person name="Reyrat J.-M."/>
        </authorList>
    </citation>
    <scope>NUCLEOTIDE SEQUENCE [LARGE SCALE GENOMIC DNA]</scope>
    <source>
        <strain>ATCC 700084 / mc(2)155</strain>
    </source>
</reference>
<reference key="3">
    <citation type="journal article" date="2009" name="Genome Res.">
        <title>Ortho-proteogenomics: multiple proteomes investigation through orthology and a new MS-based protocol.</title>
        <authorList>
            <person name="Gallien S."/>
            <person name="Perrodou E."/>
            <person name="Carapito C."/>
            <person name="Deshayes C."/>
            <person name="Reyrat J.-M."/>
            <person name="Van Dorsselaer A."/>
            <person name="Poch O."/>
            <person name="Schaeffer C."/>
            <person name="Lecompte O."/>
        </authorList>
    </citation>
    <scope>NUCLEOTIDE SEQUENCE [LARGE SCALE GENOMIC DNA]</scope>
    <source>
        <strain>ATCC 700084 / mc(2)155</strain>
    </source>
</reference>
<evidence type="ECO:0000255" key="1">
    <source>
        <dbReference type="HAMAP-Rule" id="MF_00722"/>
    </source>
</evidence>
<evidence type="ECO:0000305" key="2"/>
<gene>
    <name evidence="1" type="primary">nucS</name>
    <name type="ordered locus">MSMEG_4923</name>
    <name type="ordered locus">MSMEI_4796</name>
</gene>